<evidence type="ECO:0000255" key="1">
    <source>
        <dbReference type="HAMAP-Rule" id="MF_00052"/>
    </source>
</evidence>
<evidence type="ECO:0000255" key="2">
    <source>
        <dbReference type="PROSITE-ProRule" id="PRU01319"/>
    </source>
</evidence>
<keyword id="KW-0963">Cytoplasm</keyword>
<keyword id="KW-0255">Endonuclease</keyword>
<keyword id="KW-0378">Hydrolase</keyword>
<keyword id="KW-0464">Manganese</keyword>
<keyword id="KW-0479">Metal-binding</keyword>
<keyword id="KW-0540">Nuclease</keyword>
<keyword id="KW-1185">Reference proteome</keyword>
<protein>
    <recommendedName>
        <fullName evidence="1">Ribonuclease HII</fullName>
        <shortName evidence="1">RNase HII</shortName>
        <ecNumber evidence="1">3.1.26.4</ecNumber>
    </recommendedName>
</protein>
<name>RNH2_XYLFT</name>
<organism>
    <name type="scientific">Xylella fastidiosa (strain Temecula1 / ATCC 700964)</name>
    <dbReference type="NCBI Taxonomy" id="183190"/>
    <lineage>
        <taxon>Bacteria</taxon>
        <taxon>Pseudomonadati</taxon>
        <taxon>Pseudomonadota</taxon>
        <taxon>Gammaproteobacteria</taxon>
        <taxon>Lysobacterales</taxon>
        <taxon>Lysobacteraceae</taxon>
        <taxon>Xylella</taxon>
    </lineage>
</organism>
<dbReference type="EC" id="3.1.26.4" evidence="1"/>
<dbReference type="EMBL" id="AE009442">
    <property type="protein sequence ID" value="AAO28205.1"/>
    <property type="molecule type" value="Genomic_DNA"/>
</dbReference>
<dbReference type="RefSeq" id="WP_004089339.1">
    <property type="nucleotide sequence ID" value="NC_004556.1"/>
</dbReference>
<dbReference type="SMR" id="Q87EI6"/>
<dbReference type="KEGG" id="xft:PD_0321"/>
<dbReference type="HOGENOM" id="CLU_036532_3_2_6"/>
<dbReference type="Proteomes" id="UP000002516">
    <property type="component" value="Chromosome"/>
</dbReference>
<dbReference type="GO" id="GO:0005737">
    <property type="term" value="C:cytoplasm"/>
    <property type="evidence" value="ECO:0007669"/>
    <property type="project" value="UniProtKB-SubCell"/>
</dbReference>
<dbReference type="GO" id="GO:0032299">
    <property type="term" value="C:ribonuclease H2 complex"/>
    <property type="evidence" value="ECO:0007669"/>
    <property type="project" value="TreeGrafter"/>
</dbReference>
<dbReference type="GO" id="GO:0030145">
    <property type="term" value="F:manganese ion binding"/>
    <property type="evidence" value="ECO:0007669"/>
    <property type="project" value="UniProtKB-UniRule"/>
</dbReference>
<dbReference type="GO" id="GO:0003723">
    <property type="term" value="F:RNA binding"/>
    <property type="evidence" value="ECO:0007669"/>
    <property type="project" value="InterPro"/>
</dbReference>
<dbReference type="GO" id="GO:0004523">
    <property type="term" value="F:RNA-DNA hybrid ribonuclease activity"/>
    <property type="evidence" value="ECO:0007669"/>
    <property type="project" value="UniProtKB-UniRule"/>
</dbReference>
<dbReference type="GO" id="GO:0043137">
    <property type="term" value="P:DNA replication, removal of RNA primer"/>
    <property type="evidence" value="ECO:0007669"/>
    <property type="project" value="TreeGrafter"/>
</dbReference>
<dbReference type="GO" id="GO:0006298">
    <property type="term" value="P:mismatch repair"/>
    <property type="evidence" value="ECO:0007669"/>
    <property type="project" value="TreeGrafter"/>
</dbReference>
<dbReference type="CDD" id="cd07182">
    <property type="entry name" value="RNase_HII_bacteria_HII_like"/>
    <property type="match status" value="1"/>
</dbReference>
<dbReference type="FunFam" id="3.30.420.10:FF:000006">
    <property type="entry name" value="Ribonuclease HII"/>
    <property type="match status" value="1"/>
</dbReference>
<dbReference type="Gene3D" id="3.30.420.10">
    <property type="entry name" value="Ribonuclease H-like superfamily/Ribonuclease H"/>
    <property type="match status" value="1"/>
</dbReference>
<dbReference type="HAMAP" id="MF_00052_B">
    <property type="entry name" value="RNase_HII_B"/>
    <property type="match status" value="1"/>
</dbReference>
<dbReference type="InterPro" id="IPR022898">
    <property type="entry name" value="RNase_HII"/>
</dbReference>
<dbReference type="InterPro" id="IPR001352">
    <property type="entry name" value="RNase_HII/HIII"/>
</dbReference>
<dbReference type="InterPro" id="IPR024567">
    <property type="entry name" value="RNase_HII/HIII_dom"/>
</dbReference>
<dbReference type="InterPro" id="IPR012337">
    <property type="entry name" value="RNaseH-like_sf"/>
</dbReference>
<dbReference type="InterPro" id="IPR036397">
    <property type="entry name" value="RNaseH_sf"/>
</dbReference>
<dbReference type="NCBIfam" id="NF000595">
    <property type="entry name" value="PRK00015.1-3"/>
    <property type="match status" value="1"/>
</dbReference>
<dbReference type="PANTHER" id="PTHR10954">
    <property type="entry name" value="RIBONUCLEASE H2 SUBUNIT A"/>
    <property type="match status" value="1"/>
</dbReference>
<dbReference type="PANTHER" id="PTHR10954:SF18">
    <property type="entry name" value="RIBONUCLEASE HII"/>
    <property type="match status" value="1"/>
</dbReference>
<dbReference type="Pfam" id="PF01351">
    <property type="entry name" value="RNase_HII"/>
    <property type="match status" value="1"/>
</dbReference>
<dbReference type="SUPFAM" id="SSF53098">
    <property type="entry name" value="Ribonuclease H-like"/>
    <property type="match status" value="1"/>
</dbReference>
<dbReference type="PROSITE" id="PS51975">
    <property type="entry name" value="RNASE_H_2"/>
    <property type="match status" value="1"/>
</dbReference>
<sequence length="234" mass="25551">MVSKFDTQHLLNSNTALVAGVDEAGRGPLAGPVVVAAVVFDPSQPHINGLNDSKQLSPACRERLYAHIVERALAYKVVMIDSTQIDTLNIYQATMLGMRLAVEGVAHVAKSARIDGNRLPKNLPCPAEALVGGDARDPTIMAASILAKVTRDRHMVELHLQYPHYGFDKHKGYGTPAHLAALAEHGPCLEHRQSFAPVRRMLTPKAIHARQSAHQHNENSPTKAAFNMLIERDD</sequence>
<gene>
    <name evidence="1" type="primary">rnhB</name>
    <name type="ordered locus">PD_0321</name>
</gene>
<proteinExistence type="inferred from homology"/>
<reference key="1">
    <citation type="journal article" date="2003" name="J. Bacteriol.">
        <title>Comparative analyses of the complete genome sequences of Pierce's disease and citrus variegated chlorosis strains of Xylella fastidiosa.</title>
        <authorList>
            <person name="Van Sluys M.A."/>
            <person name="de Oliveira M.C."/>
            <person name="Monteiro-Vitorello C.B."/>
            <person name="Miyaki C.Y."/>
            <person name="Furlan L.R."/>
            <person name="Camargo L.E.A."/>
            <person name="da Silva A.C.R."/>
            <person name="Moon D.H."/>
            <person name="Takita M.A."/>
            <person name="Lemos E.G.M."/>
            <person name="Machado M.A."/>
            <person name="Ferro M.I.T."/>
            <person name="da Silva F.R."/>
            <person name="Goldman M.H.S."/>
            <person name="Goldman G.H."/>
            <person name="Lemos M.V.F."/>
            <person name="El-Dorry H."/>
            <person name="Tsai S.M."/>
            <person name="Carrer H."/>
            <person name="Carraro D.M."/>
            <person name="de Oliveira R.C."/>
            <person name="Nunes L.R."/>
            <person name="Siqueira W.J."/>
            <person name="Coutinho L.L."/>
            <person name="Kimura E.T."/>
            <person name="Ferro E.S."/>
            <person name="Harakava R."/>
            <person name="Kuramae E.E."/>
            <person name="Marino C.L."/>
            <person name="Giglioti E."/>
            <person name="Abreu I.L."/>
            <person name="Alves L.M.C."/>
            <person name="do Amaral A.M."/>
            <person name="Baia G.S."/>
            <person name="Blanco S.R."/>
            <person name="Brito M.S."/>
            <person name="Cannavan F.S."/>
            <person name="Celestino A.V."/>
            <person name="da Cunha A.F."/>
            <person name="Fenille R.C."/>
            <person name="Ferro J.A."/>
            <person name="Formighieri E.F."/>
            <person name="Kishi L.T."/>
            <person name="Leoni S.G."/>
            <person name="Oliveira A.R."/>
            <person name="Rosa V.E. Jr."/>
            <person name="Sassaki F.T."/>
            <person name="Sena J.A.D."/>
            <person name="de Souza A.A."/>
            <person name="Truffi D."/>
            <person name="Tsukumo F."/>
            <person name="Yanai G.M."/>
            <person name="Zaros L.G."/>
            <person name="Civerolo E.L."/>
            <person name="Simpson A.J.G."/>
            <person name="Almeida N.F. Jr."/>
            <person name="Setubal J.C."/>
            <person name="Kitajima J.P."/>
        </authorList>
    </citation>
    <scope>NUCLEOTIDE SEQUENCE [LARGE SCALE GENOMIC DNA]</scope>
    <source>
        <strain>Temecula1 / ATCC 700964</strain>
    </source>
</reference>
<comment type="function">
    <text evidence="1">Endonuclease that specifically degrades the RNA of RNA-DNA hybrids.</text>
</comment>
<comment type="catalytic activity">
    <reaction evidence="1">
        <text>Endonucleolytic cleavage to 5'-phosphomonoester.</text>
        <dbReference type="EC" id="3.1.26.4"/>
    </reaction>
</comment>
<comment type="cofactor">
    <cofactor evidence="1">
        <name>Mn(2+)</name>
        <dbReference type="ChEBI" id="CHEBI:29035"/>
    </cofactor>
    <cofactor evidence="1">
        <name>Mg(2+)</name>
        <dbReference type="ChEBI" id="CHEBI:18420"/>
    </cofactor>
    <text evidence="1">Manganese or magnesium. Binds 1 divalent metal ion per monomer in the absence of substrate. May bind a second metal ion after substrate binding.</text>
</comment>
<comment type="subcellular location">
    <subcellularLocation>
        <location evidence="1">Cytoplasm</location>
    </subcellularLocation>
</comment>
<comment type="similarity">
    <text evidence="1">Belongs to the RNase HII family.</text>
</comment>
<accession>Q87EI6</accession>
<feature type="chain" id="PRO_0000111657" description="Ribonuclease HII">
    <location>
        <begin position="1"/>
        <end position="234"/>
    </location>
</feature>
<feature type="domain" description="RNase H type-2" evidence="2">
    <location>
        <begin position="16"/>
        <end position="207"/>
    </location>
</feature>
<feature type="binding site" evidence="1">
    <location>
        <position position="22"/>
    </location>
    <ligand>
        <name>a divalent metal cation</name>
        <dbReference type="ChEBI" id="CHEBI:60240"/>
    </ligand>
</feature>
<feature type="binding site" evidence="1">
    <location>
        <position position="23"/>
    </location>
    <ligand>
        <name>a divalent metal cation</name>
        <dbReference type="ChEBI" id="CHEBI:60240"/>
    </ligand>
</feature>
<feature type="binding site" evidence="1">
    <location>
        <position position="115"/>
    </location>
    <ligand>
        <name>a divalent metal cation</name>
        <dbReference type="ChEBI" id="CHEBI:60240"/>
    </ligand>
</feature>